<comment type="catalytic activity">
    <reaction>
        <text>L-homoserine + ATP = O-phospho-L-homoserine + ADP + H(+)</text>
        <dbReference type="Rhea" id="RHEA:13985"/>
        <dbReference type="ChEBI" id="CHEBI:15378"/>
        <dbReference type="ChEBI" id="CHEBI:30616"/>
        <dbReference type="ChEBI" id="CHEBI:57476"/>
        <dbReference type="ChEBI" id="CHEBI:57590"/>
        <dbReference type="ChEBI" id="CHEBI:456216"/>
        <dbReference type="EC" id="2.7.1.39"/>
    </reaction>
</comment>
<comment type="pathway">
    <text>Amino-acid biosynthesis; L-threonine biosynthesis; L-threonine from L-aspartate: step 4/5.</text>
</comment>
<comment type="similarity">
    <text evidence="1">Belongs to the pseudomonas-type ThrB family.</text>
</comment>
<comment type="sequence caution" evidence="1">
    <conflict type="frameshift">
        <sequence resource="EMBL-CDS" id="BAA21850"/>
    </conflict>
</comment>
<protein>
    <recommendedName>
        <fullName>Homoserine kinase</fullName>
        <shortName>HK</shortName>
        <shortName>HSK</shortName>
        <ecNumber>2.7.1.39</ecNumber>
    </recommendedName>
</protein>
<keyword id="KW-0028">Amino-acid biosynthesis</keyword>
<keyword id="KW-0067">ATP-binding</keyword>
<keyword id="KW-0418">Kinase</keyword>
<keyword id="KW-0547">Nucleotide-binding</keyword>
<keyword id="KW-0791">Threonine biosynthesis</keyword>
<keyword id="KW-0808">Transferase</keyword>
<proteinExistence type="inferred from homology"/>
<name>KHSE_METGL</name>
<sequence length="318" mass="35622">MSVFTAVSFEQMQQWLKGYDLGELLDLQGIASGITNTNYFVATGTGRYVLTLFEEHSAEELPNFLDLMTHLAERGIPCPYPVKNIAGQALGELNGKPAALVSCLAGKSLDNPSPQHCAAIGEVLARMHLAGASFEVSIINLRCQRWRIARLPRWAPFLDAENXRMLDAQLEFEQAFDTSALSRGVIHADLFRDNVLMDGDKVGGVLDFYYAWNDVLFYDIAIAVXDWCVNADGTRDVGRVRAFLDAYHAVRPLTEEEHAAWPGMLRVAGIRFWLSRLNDLHFPQAGELIHAKDPAYFERILRKAIAAREQLLTMWVDS</sequence>
<dbReference type="EC" id="2.7.1.39"/>
<dbReference type="EMBL" id="D14072">
    <property type="protein sequence ID" value="BAA21850.1"/>
    <property type="status" value="ALT_FRAME"/>
    <property type="molecule type" value="Genomic_DNA"/>
</dbReference>
<dbReference type="UniPathway" id="UPA00050">
    <property type="reaction ID" value="UER00064"/>
</dbReference>
<dbReference type="GO" id="GO:0005524">
    <property type="term" value="F:ATP binding"/>
    <property type="evidence" value="ECO:0007669"/>
    <property type="project" value="UniProtKB-KW"/>
</dbReference>
<dbReference type="GO" id="GO:0004413">
    <property type="term" value="F:homoserine kinase activity"/>
    <property type="evidence" value="ECO:0007669"/>
    <property type="project" value="UniProtKB-UniRule"/>
</dbReference>
<dbReference type="GO" id="GO:0009088">
    <property type="term" value="P:threonine biosynthetic process"/>
    <property type="evidence" value="ECO:0007669"/>
    <property type="project" value="UniProtKB-UniRule"/>
</dbReference>
<dbReference type="CDD" id="cd05153">
    <property type="entry name" value="HomoserineK_II"/>
    <property type="match status" value="1"/>
</dbReference>
<dbReference type="Gene3D" id="3.90.1200.10">
    <property type="match status" value="1"/>
</dbReference>
<dbReference type="Gene3D" id="3.30.200.20">
    <property type="entry name" value="Phosphorylase Kinase, domain 1"/>
    <property type="match status" value="1"/>
</dbReference>
<dbReference type="HAMAP" id="MF_00301">
    <property type="entry name" value="Homoser_kinase_2"/>
    <property type="match status" value="1"/>
</dbReference>
<dbReference type="InterPro" id="IPR002575">
    <property type="entry name" value="Aminoglycoside_PTrfase"/>
</dbReference>
<dbReference type="InterPro" id="IPR005280">
    <property type="entry name" value="Homoserine_kinase_II"/>
</dbReference>
<dbReference type="InterPro" id="IPR011009">
    <property type="entry name" value="Kinase-like_dom_sf"/>
</dbReference>
<dbReference type="InterPro" id="IPR050249">
    <property type="entry name" value="Pseudomonas-type_ThrB"/>
</dbReference>
<dbReference type="NCBIfam" id="NF003558">
    <property type="entry name" value="PRK05231.1"/>
    <property type="match status" value="1"/>
</dbReference>
<dbReference type="NCBIfam" id="TIGR00938">
    <property type="entry name" value="thrB_alt"/>
    <property type="match status" value="1"/>
</dbReference>
<dbReference type="PANTHER" id="PTHR21064:SF6">
    <property type="entry name" value="AMINOGLYCOSIDE PHOSPHOTRANSFERASE DOMAIN-CONTAINING PROTEIN"/>
    <property type="match status" value="1"/>
</dbReference>
<dbReference type="PANTHER" id="PTHR21064">
    <property type="entry name" value="AMINOGLYCOSIDE PHOSPHOTRANSFERASE DOMAIN-CONTAINING PROTEIN-RELATED"/>
    <property type="match status" value="1"/>
</dbReference>
<dbReference type="Pfam" id="PF01636">
    <property type="entry name" value="APH"/>
    <property type="match status" value="1"/>
</dbReference>
<dbReference type="SUPFAM" id="SSF56112">
    <property type="entry name" value="Protein kinase-like (PK-like)"/>
    <property type="match status" value="1"/>
</dbReference>
<evidence type="ECO:0000305" key="1"/>
<feature type="chain" id="PRO_0000172191" description="Homoserine kinase">
    <location>
        <begin position="1"/>
        <end position="318"/>
    </location>
</feature>
<organism>
    <name type="scientific">Methylobacillus glycogenes</name>
    <dbReference type="NCBI Taxonomy" id="406"/>
    <lineage>
        <taxon>Bacteria</taxon>
        <taxon>Pseudomonadati</taxon>
        <taxon>Pseudomonadota</taxon>
        <taxon>Betaproteobacteria</taxon>
        <taxon>Nitrosomonadales</taxon>
        <taxon>Methylophilaceae</taxon>
        <taxon>Methylobacillus</taxon>
    </lineage>
</organism>
<gene>
    <name type="primary">thrB</name>
</gene>
<accession>O32378</accession>
<reference key="1">
    <citation type="patent" date="1993-08-20" number="JP1993207886">
        <title>Production of l-threonine by fermentation method.</title>
        <authorList>
            <person name="Motoyama H."/>
            <person name="Anazawa H."/>
            <person name="Ishino S."/>
            <person name="Teshiba S."/>
        </authorList>
    </citation>
    <scope>NUCLEOTIDE SEQUENCE [GENOMIC DNA]</scope>
    <source>
        <strain>ATR80</strain>
    </source>
</reference>
<reference key="2">
    <citation type="unpublished observations" date="2000-12">
        <authorList>
            <person name="Bairoch A."/>
        </authorList>
    </citation>
    <scope>IDENTIFICATION OF PROBABLE FRAMESHIFTS</scope>
</reference>